<accession>Q817U2</accession>
<feature type="chain" id="PRO_0000269277" description="Large ribosomal subunit protein bL21">
    <location>
        <begin position="1"/>
        <end position="102"/>
    </location>
</feature>
<reference key="1">
    <citation type="journal article" date="2003" name="Nature">
        <title>Genome sequence of Bacillus cereus and comparative analysis with Bacillus anthracis.</title>
        <authorList>
            <person name="Ivanova N."/>
            <person name="Sorokin A."/>
            <person name="Anderson I."/>
            <person name="Galleron N."/>
            <person name="Candelon B."/>
            <person name="Kapatral V."/>
            <person name="Bhattacharyya A."/>
            <person name="Reznik G."/>
            <person name="Mikhailova N."/>
            <person name="Lapidus A."/>
            <person name="Chu L."/>
            <person name="Mazur M."/>
            <person name="Goltsman E."/>
            <person name="Larsen N."/>
            <person name="D'Souza M."/>
            <person name="Walunas T."/>
            <person name="Grechkin Y."/>
            <person name="Pusch G."/>
            <person name="Haselkorn R."/>
            <person name="Fonstein M."/>
            <person name="Ehrlich S.D."/>
            <person name="Overbeek R."/>
            <person name="Kyrpides N.C."/>
        </authorList>
    </citation>
    <scope>NUCLEOTIDE SEQUENCE [LARGE SCALE GENOMIC DNA]</scope>
    <source>
        <strain>ATCC 14579 / DSM 31 / CCUG 7414 / JCM 2152 / NBRC 15305 / NCIMB 9373 / NCTC 2599 / NRRL B-3711</strain>
    </source>
</reference>
<proteinExistence type="inferred from homology"/>
<comment type="function">
    <text evidence="1">This protein binds to 23S rRNA in the presence of protein L20.</text>
</comment>
<comment type="subunit">
    <text evidence="1">Part of the 50S ribosomal subunit. Contacts protein L20.</text>
</comment>
<comment type="similarity">
    <text evidence="1">Belongs to the bacterial ribosomal protein bL21 family.</text>
</comment>
<sequence length="102" mass="11191">MYAIIETGGKQIKVEAGQAIYIEKLDVEAGETVTFDKVLFVGGENVKVGSPVVEGATVTAKVEKQGRAKKIIVFKYKAKKNNRKKQGHRQPYTKLVVEAINA</sequence>
<protein>
    <recommendedName>
        <fullName evidence="1">Large ribosomal subunit protein bL21</fullName>
    </recommendedName>
    <alternativeName>
        <fullName evidence="2">50S ribosomal protein L21</fullName>
    </alternativeName>
</protein>
<gene>
    <name evidence="1" type="primary">rplU</name>
    <name type="ordered locus">BC_4438</name>
</gene>
<evidence type="ECO:0000255" key="1">
    <source>
        <dbReference type="HAMAP-Rule" id="MF_01363"/>
    </source>
</evidence>
<evidence type="ECO:0000305" key="2"/>
<organism>
    <name type="scientific">Bacillus cereus (strain ATCC 14579 / DSM 31 / CCUG 7414 / JCM 2152 / NBRC 15305 / NCIMB 9373 / NCTC 2599 / NRRL B-3711)</name>
    <dbReference type="NCBI Taxonomy" id="226900"/>
    <lineage>
        <taxon>Bacteria</taxon>
        <taxon>Bacillati</taxon>
        <taxon>Bacillota</taxon>
        <taxon>Bacilli</taxon>
        <taxon>Bacillales</taxon>
        <taxon>Bacillaceae</taxon>
        <taxon>Bacillus</taxon>
        <taxon>Bacillus cereus group</taxon>
    </lineage>
</organism>
<dbReference type="EMBL" id="AE016877">
    <property type="protein sequence ID" value="AAP11351.1"/>
    <property type="molecule type" value="Genomic_DNA"/>
</dbReference>
<dbReference type="RefSeq" id="NP_834150.1">
    <property type="nucleotide sequence ID" value="NC_004722.1"/>
</dbReference>
<dbReference type="RefSeq" id="WP_000270907.1">
    <property type="nucleotide sequence ID" value="NZ_CP138336.1"/>
</dbReference>
<dbReference type="SMR" id="Q817U2"/>
<dbReference type="STRING" id="226900.BC_4438"/>
<dbReference type="MetOSite" id="Q817U2"/>
<dbReference type="GeneID" id="93006656"/>
<dbReference type="KEGG" id="bce:BC4438"/>
<dbReference type="PATRIC" id="fig|226900.8.peg.4589"/>
<dbReference type="HOGENOM" id="CLU_061463_3_2_9"/>
<dbReference type="OrthoDB" id="9813334at2"/>
<dbReference type="PRO" id="PR:Q817U2"/>
<dbReference type="Proteomes" id="UP000001417">
    <property type="component" value="Chromosome"/>
</dbReference>
<dbReference type="GO" id="GO:0005737">
    <property type="term" value="C:cytoplasm"/>
    <property type="evidence" value="ECO:0007669"/>
    <property type="project" value="UniProtKB-ARBA"/>
</dbReference>
<dbReference type="GO" id="GO:1990904">
    <property type="term" value="C:ribonucleoprotein complex"/>
    <property type="evidence" value="ECO:0007669"/>
    <property type="project" value="UniProtKB-KW"/>
</dbReference>
<dbReference type="GO" id="GO:0005840">
    <property type="term" value="C:ribosome"/>
    <property type="evidence" value="ECO:0007669"/>
    <property type="project" value="UniProtKB-KW"/>
</dbReference>
<dbReference type="GO" id="GO:0019843">
    <property type="term" value="F:rRNA binding"/>
    <property type="evidence" value="ECO:0007669"/>
    <property type="project" value="UniProtKB-UniRule"/>
</dbReference>
<dbReference type="GO" id="GO:0003735">
    <property type="term" value="F:structural constituent of ribosome"/>
    <property type="evidence" value="ECO:0000318"/>
    <property type="project" value="GO_Central"/>
</dbReference>
<dbReference type="GO" id="GO:0006412">
    <property type="term" value="P:translation"/>
    <property type="evidence" value="ECO:0007669"/>
    <property type="project" value="UniProtKB-UniRule"/>
</dbReference>
<dbReference type="HAMAP" id="MF_01363">
    <property type="entry name" value="Ribosomal_bL21"/>
    <property type="match status" value="1"/>
</dbReference>
<dbReference type="InterPro" id="IPR028909">
    <property type="entry name" value="bL21-like"/>
</dbReference>
<dbReference type="InterPro" id="IPR036164">
    <property type="entry name" value="bL21-like_sf"/>
</dbReference>
<dbReference type="InterPro" id="IPR001787">
    <property type="entry name" value="Ribosomal_bL21"/>
</dbReference>
<dbReference type="InterPro" id="IPR018258">
    <property type="entry name" value="Ribosomal_bL21_CS"/>
</dbReference>
<dbReference type="NCBIfam" id="TIGR00061">
    <property type="entry name" value="L21"/>
    <property type="match status" value="1"/>
</dbReference>
<dbReference type="PANTHER" id="PTHR21349">
    <property type="entry name" value="50S RIBOSOMAL PROTEIN L21"/>
    <property type="match status" value="1"/>
</dbReference>
<dbReference type="PANTHER" id="PTHR21349:SF0">
    <property type="entry name" value="LARGE RIBOSOMAL SUBUNIT PROTEIN BL21M"/>
    <property type="match status" value="1"/>
</dbReference>
<dbReference type="Pfam" id="PF00829">
    <property type="entry name" value="Ribosomal_L21p"/>
    <property type="match status" value="1"/>
</dbReference>
<dbReference type="SUPFAM" id="SSF141091">
    <property type="entry name" value="L21p-like"/>
    <property type="match status" value="1"/>
</dbReference>
<dbReference type="PROSITE" id="PS01169">
    <property type="entry name" value="RIBOSOMAL_L21"/>
    <property type="match status" value="1"/>
</dbReference>
<keyword id="KW-1185">Reference proteome</keyword>
<keyword id="KW-0687">Ribonucleoprotein</keyword>
<keyword id="KW-0689">Ribosomal protein</keyword>
<keyword id="KW-0694">RNA-binding</keyword>
<keyword id="KW-0699">rRNA-binding</keyword>
<name>RL21_BACCR</name>